<accession>Q7XPU9</accession>
<accession>A3AYS9</accession>
<accession>Q0J8W4</accession>
<sequence length="224" mass="23656">MSSGEPAAVSIPIHDHHGKAPATSSAVPAAAAAAPAAAPAVAPRKVGIPFFRRGDHHRGSRCLAFLDFILRIAAFGPALAAAISTGTSDETLSVFTEFYQFRARFDDFPAFLFFLVANAIVAGYLVLSLPFSAVLVIRPQTIGLRLLLLVCDMIMAAMLTAAASAAAAIVDLAHNGNLRANWVAICMQFHGFCQRTSGSVVASFLTVVILMFLVILAACSIRKR</sequence>
<dbReference type="EMBL" id="AL606651">
    <property type="protein sequence ID" value="CAE03449.1"/>
    <property type="molecule type" value="Genomic_DNA"/>
</dbReference>
<dbReference type="EMBL" id="AP008210">
    <property type="protein sequence ID" value="BAF16223.1"/>
    <property type="status" value="ALT_SEQ"/>
    <property type="molecule type" value="Genomic_DNA"/>
</dbReference>
<dbReference type="EMBL" id="AP014960">
    <property type="status" value="NOT_ANNOTATED_CDS"/>
    <property type="molecule type" value="Genomic_DNA"/>
</dbReference>
<dbReference type="EMBL" id="CM000141">
    <property type="protein sequence ID" value="EEE61938.1"/>
    <property type="molecule type" value="Genomic_DNA"/>
</dbReference>
<dbReference type="RefSeq" id="XP_015634469.1">
    <property type="nucleotide sequence ID" value="XM_015778983.1"/>
</dbReference>
<dbReference type="SMR" id="Q7XPU9"/>
<dbReference type="FunCoup" id="Q7XPU9">
    <property type="interactions" value="7"/>
</dbReference>
<dbReference type="PaxDb" id="39947-Q7XPU9"/>
<dbReference type="EnsemblPlants" id="Os04t0684300-02">
    <property type="protein sequence ID" value="Os04t0684300-02"/>
    <property type="gene ID" value="Os04g0684300"/>
</dbReference>
<dbReference type="Gramene" id="Os04t0684300-02">
    <property type="protein sequence ID" value="Os04t0684300-02"/>
    <property type="gene ID" value="Os04g0684300"/>
</dbReference>
<dbReference type="KEGG" id="dosa:Os04g0684300"/>
<dbReference type="InParanoid" id="Q7XPU9"/>
<dbReference type="OrthoDB" id="753675at2759"/>
<dbReference type="Proteomes" id="UP000000763">
    <property type="component" value="Chromosome 4"/>
</dbReference>
<dbReference type="Proteomes" id="UP000007752">
    <property type="component" value="Chromosome 4"/>
</dbReference>
<dbReference type="Proteomes" id="UP000059680">
    <property type="component" value="Chromosome 4"/>
</dbReference>
<dbReference type="GO" id="GO:0048226">
    <property type="term" value="C:Casparian strip"/>
    <property type="evidence" value="ECO:0000318"/>
    <property type="project" value="GO_Central"/>
</dbReference>
<dbReference type="GO" id="GO:0005886">
    <property type="term" value="C:plasma membrane"/>
    <property type="evidence" value="ECO:0000318"/>
    <property type="project" value="GO_Central"/>
</dbReference>
<dbReference type="GO" id="GO:0042545">
    <property type="term" value="P:cell wall modification"/>
    <property type="evidence" value="ECO:0000318"/>
    <property type="project" value="GO_Central"/>
</dbReference>
<dbReference type="GO" id="GO:0007043">
    <property type="term" value="P:cell-cell junction assembly"/>
    <property type="evidence" value="ECO:0000318"/>
    <property type="project" value="GO_Central"/>
</dbReference>
<dbReference type="InterPro" id="IPR006459">
    <property type="entry name" value="CASP/CASPL"/>
</dbReference>
<dbReference type="InterPro" id="IPR006702">
    <property type="entry name" value="CASP_dom"/>
</dbReference>
<dbReference type="InterPro" id="IPR044173">
    <property type="entry name" value="CASPL"/>
</dbReference>
<dbReference type="NCBIfam" id="TIGR01569">
    <property type="entry name" value="A_tha_TIGR01569"/>
    <property type="match status" value="1"/>
</dbReference>
<dbReference type="PANTHER" id="PTHR36488:SF11">
    <property type="entry name" value="CASP-LIKE PROTEIN"/>
    <property type="match status" value="1"/>
</dbReference>
<dbReference type="PANTHER" id="PTHR36488">
    <property type="entry name" value="CASP-LIKE PROTEIN 1U1"/>
    <property type="match status" value="1"/>
</dbReference>
<dbReference type="Pfam" id="PF04535">
    <property type="entry name" value="CASP_dom"/>
    <property type="match status" value="1"/>
</dbReference>
<proteinExistence type="inferred from homology"/>
<organism>
    <name type="scientific">Oryza sativa subsp. japonica</name>
    <name type="common">Rice</name>
    <dbReference type="NCBI Taxonomy" id="39947"/>
    <lineage>
        <taxon>Eukaryota</taxon>
        <taxon>Viridiplantae</taxon>
        <taxon>Streptophyta</taxon>
        <taxon>Embryophyta</taxon>
        <taxon>Tracheophyta</taxon>
        <taxon>Spermatophyta</taxon>
        <taxon>Magnoliopsida</taxon>
        <taxon>Liliopsida</taxon>
        <taxon>Poales</taxon>
        <taxon>Poaceae</taxon>
        <taxon>BOP clade</taxon>
        <taxon>Oryzoideae</taxon>
        <taxon>Oryzeae</taxon>
        <taxon>Oryzinae</taxon>
        <taxon>Oryza</taxon>
        <taxon>Oryza sativa</taxon>
    </lineage>
</organism>
<gene>
    <name type="ordered locus">Os04g0684300</name>
    <name type="ordered locus">LOC_Os04g58760</name>
    <name type="ORF">OsJ_015951</name>
    <name type="ORF">OSJNBa0088H09.7</name>
</gene>
<protein>
    <recommendedName>
        <fullName>Casparian strip membrane protein 1</fullName>
        <shortName>OsCASP1</shortName>
    </recommendedName>
</protein>
<keyword id="KW-1003">Cell membrane</keyword>
<keyword id="KW-0961">Cell wall biogenesis/degradation</keyword>
<keyword id="KW-0472">Membrane</keyword>
<keyword id="KW-1185">Reference proteome</keyword>
<keyword id="KW-0812">Transmembrane</keyword>
<keyword id="KW-1133">Transmembrane helix</keyword>
<reference key="1">
    <citation type="journal article" date="2002" name="Nature">
        <title>Sequence and analysis of rice chromosome 4.</title>
        <authorList>
            <person name="Feng Q."/>
            <person name="Zhang Y."/>
            <person name="Hao P."/>
            <person name="Wang S."/>
            <person name="Fu G."/>
            <person name="Huang Y."/>
            <person name="Li Y."/>
            <person name="Zhu J."/>
            <person name="Liu Y."/>
            <person name="Hu X."/>
            <person name="Jia P."/>
            <person name="Zhang Y."/>
            <person name="Zhao Q."/>
            <person name="Ying K."/>
            <person name="Yu S."/>
            <person name="Tang Y."/>
            <person name="Weng Q."/>
            <person name="Zhang L."/>
            <person name="Lu Y."/>
            <person name="Mu J."/>
            <person name="Lu Y."/>
            <person name="Zhang L.S."/>
            <person name="Yu Z."/>
            <person name="Fan D."/>
            <person name="Liu X."/>
            <person name="Lu T."/>
            <person name="Li C."/>
            <person name="Wu Y."/>
            <person name="Sun T."/>
            <person name="Lei H."/>
            <person name="Li T."/>
            <person name="Hu H."/>
            <person name="Guan J."/>
            <person name="Wu M."/>
            <person name="Zhang R."/>
            <person name="Zhou B."/>
            <person name="Chen Z."/>
            <person name="Chen L."/>
            <person name="Jin Z."/>
            <person name="Wang R."/>
            <person name="Yin H."/>
            <person name="Cai Z."/>
            <person name="Ren S."/>
            <person name="Lv G."/>
            <person name="Gu W."/>
            <person name="Zhu G."/>
            <person name="Tu Y."/>
            <person name="Jia J."/>
            <person name="Zhang Y."/>
            <person name="Chen J."/>
            <person name="Kang H."/>
            <person name="Chen X."/>
            <person name="Shao C."/>
            <person name="Sun Y."/>
            <person name="Hu Q."/>
            <person name="Zhang X."/>
            <person name="Zhang W."/>
            <person name="Wang L."/>
            <person name="Ding C."/>
            <person name="Sheng H."/>
            <person name="Gu J."/>
            <person name="Chen S."/>
            <person name="Ni L."/>
            <person name="Zhu F."/>
            <person name="Chen W."/>
            <person name="Lan L."/>
            <person name="Lai Y."/>
            <person name="Cheng Z."/>
            <person name="Gu M."/>
            <person name="Jiang J."/>
            <person name="Li J."/>
            <person name="Hong G."/>
            <person name="Xue Y."/>
            <person name="Han B."/>
        </authorList>
    </citation>
    <scope>NUCLEOTIDE SEQUENCE [LARGE SCALE GENOMIC DNA]</scope>
    <source>
        <strain>cv. Nipponbare</strain>
    </source>
</reference>
<reference key="2">
    <citation type="journal article" date="2005" name="Nature">
        <title>The map-based sequence of the rice genome.</title>
        <authorList>
            <consortium name="International rice genome sequencing project (IRGSP)"/>
        </authorList>
    </citation>
    <scope>NUCLEOTIDE SEQUENCE [LARGE SCALE GENOMIC DNA]</scope>
    <source>
        <strain>cv. Nipponbare</strain>
    </source>
</reference>
<reference key="3">
    <citation type="journal article" date="2008" name="Nucleic Acids Res.">
        <title>The rice annotation project database (RAP-DB): 2008 update.</title>
        <authorList>
            <consortium name="The rice annotation project (RAP)"/>
        </authorList>
    </citation>
    <scope>GENOME REANNOTATION</scope>
    <source>
        <strain>cv. Nipponbare</strain>
    </source>
</reference>
<reference key="4">
    <citation type="journal article" date="2013" name="Rice">
        <title>Improvement of the Oryza sativa Nipponbare reference genome using next generation sequence and optical map data.</title>
        <authorList>
            <person name="Kawahara Y."/>
            <person name="de la Bastide M."/>
            <person name="Hamilton J.P."/>
            <person name="Kanamori H."/>
            <person name="McCombie W.R."/>
            <person name="Ouyang S."/>
            <person name="Schwartz D.C."/>
            <person name="Tanaka T."/>
            <person name="Wu J."/>
            <person name="Zhou S."/>
            <person name="Childs K.L."/>
            <person name="Davidson R.M."/>
            <person name="Lin H."/>
            <person name="Quesada-Ocampo L."/>
            <person name="Vaillancourt B."/>
            <person name="Sakai H."/>
            <person name="Lee S.S."/>
            <person name="Kim J."/>
            <person name="Numa H."/>
            <person name="Itoh T."/>
            <person name="Buell C.R."/>
            <person name="Matsumoto T."/>
        </authorList>
    </citation>
    <scope>GENOME REANNOTATION</scope>
    <source>
        <strain>cv. Nipponbare</strain>
    </source>
</reference>
<reference key="5">
    <citation type="journal article" date="2005" name="PLoS Biol.">
        <title>The genomes of Oryza sativa: a history of duplications.</title>
        <authorList>
            <person name="Yu J."/>
            <person name="Wang J."/>
            <person name="Lin W."/>
            <person name="Li S."/>
            <person name="Li H."/>
            <person name="Zhou J."/>
            <person name="Ni P."/>
            <person name="Dong W."/>
            <person name="Hu S."/>
            <person name="Zeng C."/>
            <person name="Zhang J."/>
            <person name="Zhang Y."/>
            <person name="Li R."/>
            <person name="Xu Z."/>
            <person name="Li S."/>
            <person name="Li X."/>
            <person name="Zheng H."/>
            <person name="Cong L."/>
            <person name="Lin L."/>
            <person name="Yin J."/>
            <person name="Geng J."/>
            <person name="Li G."/>
            <person name="Shi J."/>
            <person name="Liu J."/>
            <person name="Lv H."/>
            <person name="Li J."/>
            <person name="Wang J."/>
            <person name="Deng Y."/>
            <person name="Ran L."/>
            <person name="Shi X."/>
            <person name="Wang X."/>
            <person name="Wu Q."/>
            <person name="Li C."/>
            <person name="Ren X."/>
            <person name="Wang J."/>
            <person name="Wang X."/>
            <person name="Li D."/>
            <person name="Liu D."/>
            <person name="Zhang X."/>
            <person name="Ji Z."/>
            <person name="Zhao W."/>
            <person name="Sun Y."/>
            <person name="Zhang Z."/>
            <person name="Bao J."/>
            <person name="Han Y."/>
            <person name="Dong L."/>
            <person name="Ji J."/>
            <person name="Chen P."/>
            <person name="Wu S."/>
            <person name="Liu J."/>
            <person name="Xiao Y."/>
            <person name="Bu D."/>
            <person name="Tan J."/>
            <person name="Yang L."/>
            <person name="Ye C."/>
            <person name="Zhang J."/>
            <person name="Xu J."/>
            <person name="Zhou Y."/>
            <person name="Yu Y."/>
            <person name="Zhang B."/>
            <person name="Zhuang S."/>
            <person name="Wei H."/>
            <person name="Liu B."/>
            <person name="Lei M."/>
            <person name="Yu H."/>
            <person name="Li Y."/>
            <person name="Xu H."/>
            <person name="Wei S."/>
            <person name="He X."/>
            <person name="Fang L."/>
            <person name="Zhang Z."/>
            <person name="Zhang Y."/>
            <person name="Huang X."/>
            <person name="Su Z."/>
            <person name="Tong W."/>
            <person name="Li J."/>
            <person name="Tong Z."/>
            <person name="Li S."/>
            <person name="Ye J."/>
            <person name="Wang L."/>
            <person name="Fang L."/>
            <person name="Lei T."/>
            <person name="Chen C.-S."/>
            <person name="Chen H.-C."/>
            <person name="Xu Z."/>
            <person name="Li H."/>
            <person name="Huang H."/>
            <person name="Zhang F."/>
            <person name="Xu H."/>
            <person name="Li N."/>
            <person name="Zhao C."/>
            <person name="Li S."/>
            <person name="Dong L."/>
            <person name="Huang Y."/>
            <person name="Li L."/>
            <person name="Xi Y."/>
            <person name="Qi Q."/>
            <person name="Li W."/>
            <person name="Zhang B."/>
            <person name="Hu W."/>
            <person name="Zhang Y."/>
            <person name="Tian X."/>
            <person name="Jiao Y."/>
            <person name="Liang X."/>
            <person name="Jin J."/>
            <person name="Gao L."/>
            <person name="Zheng W."/>
            <person name="Hao B."/>
            <person name="Liu S.-M."/>
            <person name="Wang W."/>
            <person name="Yuan L."/>
            <person name="Cao M."/>
            <person name="McDermott J."/>
            <person name="Samudrala R."/>
            <person name="Wang J."/>
            <person name="Wong G.K.-S."/>
            <person name="Yang H."/>
        </authorList>
    </citation>
    <scope>NUCLEOTIDE SEQUENCE [LARGE SCALE GENOMIC DNA]</scope>
    <source>
        <strain>cv. Nipponbare</strain>
    </source>
</reference>
<reference key="6">
    <citation type="journal article" date="2014" name="Plant Physiol.">
        <title>Functional and evolutionary analysis of the CASPARIAN STRIP MEMBRANE DOMAIN PROTEIN family.</title>
        <authorList>
            <person name="Roppolo D."/>
            <person name="Boeckmann B."/>
            <person name="Pfister A."/>
            <person name="Boutet E."/>
            <person name="Rubio M.C."/>
            <person name="Denervaud-Tendon V."/>
            <person name="Vermeer J.E."/>
            <person name="Gheyselinck J."/>
            <person name="Xenarios I."/>
            <person name="Geldner N."/>
        </authorList>
    </citation>
    <scope>GENE FAMILY</scope>
    <scope>NOMENCLATURE</scope>
</reference>
<feature type="chain" id="PRO_0000370289" description="Casparian strip membrane protein 1">
    <location>
        <begin position="1"/>
        <end position="224"/>
    </location>
</feature>
<feature type="topological domain" description="Cytoplasmic" evidence="2">
    <location>
        <begin position="1"/>
        <end position="62"/>
    </location>
</feature>
<feature type="transmembrane region" description="Helical" evidence="2">
    <location>
        <begin position="63"/>
        <end position="83"/>
    </location>
</feature>
<feature type="topological domain" description="Extracellular" evidence="2">
    <location>
        <begin position="84"/>
        <end position="110"/>
    </location>
</feature>
<feature type="transmembrane region" description="Helical" evidence="2">
    <location>
        <begin position="111"/>
        <end position="131"/>
    </location>
</feature>
<feature type="topological domain" description="Cytoplasmic" evidence="2">
    <location>
        <begin position="132"/>
        <end position="145"/>
    </location>
</feature>
<feature type="transmembrane region" description="Helical" evidence="2">
    <location>
        <begin position="146"/>
        <end position="166"/>
    </location>
</feature>
<feature type="topological domain" description="Extracellular" evidence="2">
    <location>
        <begin position="167"/>
        <end position="200"/>
    </location>
</feature>
<feature type="transmembrane region" description="Helical" evidence="2">
    <location>
        <begin position="201"/>
        <end position="221"/>
    </location>
</feature>
<feature type="topological domain" description="Cytoplasmic" evidence="2">
    <location>
        <begin position="222"/>
        <end position="224"/>
    </location>
</feature>
<feature type="region of interest" description="Disordered" evidence="3">
    <location>
        <begin position="1"/>
        <end position="22"/>
    </location>
</feature>
<name>CASP1_ORYSJ</name>
<evidence type="ECO:0000250" key="1"/>
<evidence type="ECO:0000255" key="2"/>
<evidence type="ECO:0000256" key="3">
    <source>
        <dbReference type="SAM" id="MobiDB-lite"/>
    </source>
</evidence>
<evidence type="ECO:0000305" key="4"/>
<comment type="function">
    <text evidence="1">Regulates membrane-cell wall junctions and localized cell wall deposition. Required for establishment of the Casparian strip membrane domain (CSD) and the subsequent formation of Casparian strips, a cell wall modification of the root endodermis that determines an apoplastic barrier between the intraorganismal apoplasm and the extraorganismal apoplasm and prevents lateral diffusion (By similarity).</text>
</comment>
<comment type="subunit">
    <text evidence="1">Homodimer and heterodimers.</text>
</comment>
<comment type="subcellular location">
    <subcellularLocation>
        <location evidence="1">Cell membrane</location>
        <topology evidence="1">Multi-pass membrane protein</topology>
    </subcellularLocation>
    <text evidence="1">Very restricted localization following a belt shape within the plasma membrane which coincides with the position of the Casparian strip membrane domain in the root endodermis.</text>
</comment>
<comment type="similarity">
    <text evidence="4">Belongs to the Casparian strip membrane proteins (CASP) family.</text>
</comment>
<comment type="sequence caution" evidence="4">
    <conflict type="erroneous gene model prediction">
        <sequence resource="EMBL-CDS" id="BAF16223"/>
    </conflict>
</comment>